<evidence type="ECO:0000255" key="1">
    <source>
        <dbReference type="HAMAP-Rule" id="MF_00120"/>
    </source>
</evidence>
<gene>
    <name evidence="1" type="primary">gatA</name>
    <name type="ordered locus">HPP12_0837</name>
</gene>
<organism>
    <name type="scientific">Helicobacter pylori (strain P12)</name>
    <dbReference type="NCBI Taxonomy" id="570508"/>
    <lineage>
        <taxon>Bacteria</taxon>
        <taxon>Pseudomonadati</taxon>
        <taxon>Campylobacterota</taxon>
        <taxon>Epsilonproteobacteria</taxon>
        <taxon>Campylobacterales</taxon>
        <taxon>Helicobacteraceae</taxon>
        <taxon>Helicobacter</taxon>
    </lineage>
</organism>
<name>GATA_HELP2</name>
<accession>B6JM61</accession>
<keyword id="KW-0067">ATP-binding</keyword>
<keyword id="KW-0436">Ligase</keyword>
<keyword id="KW-0547">Nucleotide-binding</keyword>
<keyword id="KW-0648">Protein biosynthesis</keyword>
<comment type="function">
    <text evidence="1">Allows the formation of correctly charged Gln-tRNA(Gln) through the transamidation of misacylated Glu-tRNA(Gln) in organisms which lack glutaminyl-tRNA synthetase. The reaction takes place in the presence of glutamine and ATP through an activated gamma-phospho-Glu-tRNA(Gln).</text>
</comment>
<comment type="catalytic activity">
    <reaction evidence="1">
        <text>L-glutamyl-tRNA(Gln) + L-glutamine + ATP + H2O = L-glutaminyl-tRNA(Gln) + L-glutamate + ADP + phosphate + H(+)</text>
        <dbReference type="Rhea" id="RHEA:17521"/>
        <dbReference type="Rhea" id="RHEA-COMP:9681"/>
        <dbReference type="Rhea" id="RHEA-COMP:9684"/>
        <dbReference type="ChEBI" id="CHEBI:15377"/>
        <dbReference type="ChEBI" id="CHEBI:15378"/>
        <dbReference type="ChEBI" id="CHEBI:29985"/>
        <dbReference type="ChEBI" id="CHEBI:30616"/>
        <dbReference type="ChEBI" id="CHEBI:43474"/>
        <dbReference type="ChEBI" id="CHEBI:58359"/>
        <dbReference type="ChEBI" id="CHEBI:78520"/>
        <dbReference type="ChEBI" id="CHEBI:78521"/>
        <dbReference type="ChEBI" id="CHEBI:456216"/>
        <dbReference type="EC" id="6.3.5.7"/>
    </reaction>
</comment>
<comment type="subunit">
    <text evidence="1">Heterotrimer of A, B and C subunits.</text>
</comment>
<comment type="similarity">
    <text evidence="1">Belongs to the amidase family. GatA subfamily.</text>
</comment>
<feature type="chain" id="PRO_1000095138" description="Glutamyl-tRNA(Gln) amidotransferase subunit A">
    <location>
        <begin position="1"/>
        <end position="453"/>
    </location>
</feature>
<feature type="active site" description="Charge relay system" evidence="1">
    <location>
        <position position="53"/>
    </location>
</feature>
<feature type="active site" description="Charge relay system" evidence="1">
    <location>
        <position position="128"/>
    </location>
</feature>
<feature type="active site" description="Acyl-ester intermediate" evidence="1">
    <location>
        <position position="152"/>
    </location>
</feature>
<sequence>MITLKQALSLSQDELETLKNEIDAKVRASDLNAYIKAPSLNGASAKGVPILIKDNISVKGWEITCSSKILEGYVAPYHASVMENLHQNGMAGFGLSNMDEFAMGSTTESSCYGITKNPRDKNRVPGGSSGGSAAAVAGGLAVAALGSDTGGSIRQPASYCGCVGLKPTYGRVSRYGLIAYCSSFDQIGPITQNVEDASILFDAISGHDNKDSTSANLKPTQTFKNLNRDKRFKIAILRDHIKDASNEVQLAYENTLKALKEMGHEIVEKKMLDSHYQISIYYIISMAEASSNLARFDGVRYGRRAQNIKDLKELYLKSRSEGFGDEVKRRIMLGNFVLSSGYYDAYYLKAQQMRLMIKEQYNKIFEEVDLIFTPVAPTSAHLFNYHASPLEMYLSDIYTIGANLSGLPALSLPVAKDPLGLPIGMQFIAKAFDEQSLLDVSYALEQELDLKLD</sequence>
<dbReference type="EC" id="6.3.5.7" evidence="1"/>
<dbReference type="EMBL" id="CP001217">
    <property type="protein sequence ID" value="ACJ07989.1"/>
    <property type="molecule type" value="Genomic_DNA"/>
</dbReference>
<dbReference type="SMR" id="B6JM61"/>
<dbReference type="KEGG" id="hpp:HPP12_0837"/>
<dbReference type="HOGENOM" id="CLU_009600_0_3_7"/>
<dbReference type="Proteomes" id="UP000008198">
    <property type="component" value="Chromosome"/>
</dbReference>
<dbReference type="GO" id="GO:0030956">
    <property type="term" value="C:glutamyl-tRNA(Gln) amidotransferase complex"/>
    <property type="evidence" value="ECO:0007669"/>
    <property type="project" value="InterPro"/>
</dbReference>
<dbReference type="GO" id="GO:0005524">
    <property type="term" value="F:ATP binding"/>
    <property type="evidence" value="ECO:0007669"/>
    <property type="project" value="UniProtKB-KW"/>
</dbReference>
<dbReference type="GO" id="GO:0050567">
    <property type="term" value="F:glutaminyl-tRNA synthase (glutamine-hydrolyzing) activity"/>
    <property type="evidence" value="ECO:0007669"/>
    <property type="project" value="UniProtKB-UniRule"/>
</dbReference>
<dbReference type="GO" id="GO:0006412">
    <property type="term" value="P:translation"/>
    <property type="evidence" value="ECO:0007669"/>
    <property type="project" value="UniProtKB-UniRule"/>
</dbReference>
<dbReference type="Gene3D" id="3.90.1300.10">
    <property type="entry name" value="Amidase signature (AS) domain"/>
    <property type="match status" value="1"/>
</dbReference>
<dbReference type="HAMAP" id="MF_00120">
    <property type="entry name" value="GatA"/>
    <property type="match status" value="1"/>
</dbReference>
<dbReference type="InterPro" id="IPR000120">
    <property type="entry name" value="Amidase"/>
</dbReference>
<dbReference type="InterPro" id="IPR020556">
    <property type="entry name" value="Amidase_CS"/>
</dbReference>
<dbReference type="InterPro" id="IPR023631">
    <property type="entry name" value="Amidase_dom"/>
</dbReference>
<dbReference type="InterPro" id="IPR036928">
    <property type="entry name" value="AS_sf"/>
</dbReference>
<dbReference type="InterPro" id="IPR004412">
    <property type="entry name" value="GatA"/>
</dbReference>
<dbReference type="NCBIfam" id="TIGR00132">
    <property type="entry name" value="gatA"/>
    <property type="match status" value="1"/>
</dbReference>
<dbReference type="PANTHER" id="PTHR11895:SF151">
    <property type="entry name" value="GLUTAMYL-TRNA(GLN) AMIDOTRANSFERASE SUBUNIT A"/>
    <property type="match status" value="1"/>
</dbReference>
<dbReference type="PANTHER" id="PTHR11895">
    <property type="entry name" value="TRANSAMIDASE"/>
    <property type="match status" value="1"/>
</dbReference>
<dbReference type="Pfam" id="PF01425">
    <property type="entry name" value="Amidase"/>
    <property type="match status" value="1"/>
</dbReference>
<dbReference type="SUPFAM" id="SSF75304">
    <property type="entry name" value="Amidase signature (AS) enzymes"/>
    <property type="match status" value="1"/>
</dbReference>
<dbReference type="PROSITE" id="PS00571">
    <property type="entry name" value="AMIDASES"/>
    <property type="match status" value="1"/>
</dbReference>
<protein>
    <recommendedName>
        <fullName evidence="1">Glutamyl-tRNA(Gln) amidotransferase subunit A</fullName>
        <shortName evidence="1">Glu-ADT subunit A</shortName>
        <ecNumber evidence="1">6.3.5.7</ecNumber>
    </recommendedName>
</protein>
<reference key="1">
    <citation type="submission" date="2008-10" db="EMBL/GenBank/DDBJ databases">
        <title>The complete genome sequence of Helicobacter pylori strain P12.</title>
        <authorList>
            <person name="Fischer W."/>
            <person name="Windhager L."/>
            <person name="Karnholz A."/>
            <person name="Zeiller M."/>
            <person name="Zimmer R."/>
            <person name="Haas R."/>
        </authorList>
    </citation>
    <scope>NUCLEOTIDE SEQUENCE [LARGE SCALE GENOMIC DNA]</scope>
    <source>
        <strain>P12</strain>
    </source>
</reference>
<proteinExistence type="inferred from homology"/>